<feature type="chain" id="PRO_0000052413" description="Na(+)/H(+) antiporter NhaB">
    <location>
        <begin position="1"/>
        <end position="513"/>
    </location>
</feature>
<feature type="transmembrane region" description="Helical" evidence="1">
    <location>
        <begin position="23"/>
        <end position="43"/>
    </location>
</feature>
<feature type="transmembrane region" description="Helical" evidence="1">
    <location>
        <begin position="52"/>
        <end position="72"/>
    </location>
</feature>
<feature type="transmembrane region" description="Helical" evidence="1">
    <location>
        <begin position="97"/>
        <end position="117"/>
    </location>
</feature>
<feature type="transmembrane region" description="Helical" evidence="1">
    <location>
        <begin position="120"/>
        <end position="140"/>
    </location>
</feature>
<feature type="transmembrane region" description="Helical" evidence="1">
    <location>
        <begin position="144"/>
        <end position="164"/>
    </location>
</feature>
<feature type="transmembrane region" description="Helical" evidence="1">
    <location>
        <begin position="202"/>
        <end position="222"/>
    </location>
</feature>
<feature type="transmembrane region" description="Helical" evidence="1">
    <location>
        <begin position="238"/>
        <end position="258"/>
    </location>
</feature>
<feature type="transmembrane region" description="Helical" evidence="1">
    <location>
        <begin position="303"/>
        <end position="323"/>
    </location>
</feature>
<feature type="transmembrane region" description="Helical" evidence="1">
    <location>
        <begin position="348"/>
        <end position="368"/>
    </location>
</feature>
<feature type="transmembrane region" description="Helical" evidence="1">
    <location>
        <begin position="391"/>
        <end position="411"/>
    </location>
</feature>
<feature type="transmembrane region" description="Helical" evidence="1">
    <location>
        <begin position="447"/>
        <end position="467"/>
    </location>
</feature>
<feature type="transmembrane region" description="Helical" evidence="1">
    <location>
        <begin position="475"/>
        <end position="495"/>
    </location>
</feature>
<dbReference type="EMBL" id="AE005174">
    <property type="protein sequence ID" value="AAG56037.1"/>
    <property type="molecule type" value="Genomic_DNA"/>
</dbReference>
<dbReference type="EMBL" id="BA000007">
    <property type="protein sequence ID" value="BAB35104.1"/>
    <property type="molecule type" value="Genomic_DNA"/>
</dbReference>
<dbReference type="PIR" id="A99839">
    <property type="entry name" value="A99839"/>
</dbReference>
<dbReference type="RefSeq" id="NP_309708.1">
    <property type="nucleotide sequence ID" value="NC_002695.1"/>
</dbReference>
<dbReference type="RefSeq" id="WP_000406391.1">
    <property type="nucleotide sequence ID" value="NZ_VOAI01000042.1"/>
</dbReference>
<dbReference type="SMR" id="P0AFA8"/>
<dbReference type="STRING" id="155864.Z1949"/>
<dbReference type="GeneID" id="75203299"/>
<dbReference type="GeneID" id="913191"/>
<dbReference type="KEGG" id="ece:Z1949"/>
<dbReference type="KEGG" id="ecs:ECs_1681"/>
<dbReference type="PATRIC" id="fig|386585.9.peg.1778"/>
<dbReference type="eggNOG" id="COG3067">
    <property type="taxonomic scope" value="Bacteria"/>
</dbReference>
<dbReference type="HOGENOM" id="CLU_041110_0_0_6"/>
<dbReference type="OMA" id="FFIRMAP"/>
<dbReference type="Proteomes" id="UP000000558">
    <property type="component" value="Chromosome"/>
</dbReference>
<dbReference type="Proteomes" id="UP000002519">
    <property type="component" value="Chromosome"/>
</dbReference>
<dbReference type="GO" id="GO:0005886">
    <property type="term" value="C:plasma membrane"/>
    <property type="evidence" value="ECO:0007669"/>
    <property type="project" value="UniProtKB-SubCell"/>
</dbReference>
<dbReference type="GO" id="GO:0015385">
    <property type="term" value="F:sodium:proton antiporter activity"/>
    <property type="evidence" value="ECO:0007669"/>
    <property type="project" value="InterPro"/>
</dbReference>
<dbReference type="HAMAP" id="MF_01599">
    <property type="entry name" value="NhaB"/>
    <property type="match status" value="1"/>
</dbReference>
<dbReference type="InterPro" id="IPR004671">
    <property type="entry name" value="Na+/H+_antiporter_NhaB"/>
</dbReference>
<dbReference type="NCBIfam" id="TIGR00774">
    <property type="entry name" value="NhaB"/>
    <property type="match status" value="1"/>
</dbReference>
<dbReference type="NCBIfam" id="NF007093">
    <property type="entry name" value="PRK09547.1"/>
    <property type="match status" value="1"/>
</dbReference>
<dbReference type="PANTHER" id="PTHR43302:SF1">
    <property type="entry name" value="NA(+)_H(+) ANTIPORTER NHAB"/>
    <property type="match status" value="1"/>
</dbReference>
<dbReference type="PANTHER" id="PTHR43302">
    <property type="entry name" value="TRANSPORTER ARSB-RELATED"/>
    <property type="match status" value="1"/>
</dbReference>
<dbReference type="Pfam" id="PF06450">
    <property type="entry name" value="NhaB"/>
    <property type="match status" value="1"/>
</dbReference>
<sequence length="513" mass="56728">MEISWGRALWRNFLGQSPDWYKLALIIFLIVNPLIFLISPFVAGWLLVAEFIFTLAMALKCYPLLPGGLLAIEAVFIGMTSAEHVREEVAANLEVLLLLMFMVAGIYFMKQLLLFIFTRLLLSIRSKMLLSLSFCVAAAFLSAFLDALTVVAVVISVAVGFYGIYHRVASSRTEDTDLQDDSHIDKHYKVVLEQFRGFLRSLMMHAGVGTALGGVMTMVGEPQNLIIAKAAGWHFGDFFLRMSPVTVPVLICGLLTCLLVEKLRWFGYGETLPEKVREVLQQFDDQSRHQRTRQDKIRLIVQAIIGVWLVTALALHLAEVGLIGLSVIILATSLTGVTDEHAIGKAFTESLPFTALLTVFFSVVAVIIDQQLFSPIIQFVLQASEHAQLSLFYIFNGLLSSISDNVFVGTIYINEAKAAMESGAITLKQYELLAVAINTGTNLPSVATPNGQAAFLFLLTSALAPLIRLSYGRMVWMALPYTLVLTLVGLLCVEFTLAPVTEWFMQMGWIATL</sequence>
<comment type="function">
    <text evidence="1">Na(+)/H(+) antiporter that extrudes sodium in exchange for external protons.</text>
</comment>
<comment type="catalytic activity">
    <reaction evidence="1">
        <text>2 Na(+)(in) + 3 H(+)(out) = 2 Na(+)(out) + 3 H(+)(in)</text>
        <dbReference type="Rhea" id="RHEA:29247"/>
        <dbReference type="ChEBI" id="CHEBI:15378"/>
        <dbReference type="ChEBI" id="CHEBI:29101"/>
    </reaction>
    <physiologicalReaction direction="left-to-right" evidence="1">
        <dbReference type="Rhea" id="RHEA:29248"/>
    </physiologicalReaction>
</comment>
<comment type="subcellular location">
    <subcellularLocation>
        <location evidence="1">Cell inner membrane</location>
        <topology evidence="1">Multi-pass membrane protein</topology>
    </subcellularLocation>
</comment>
<comment type="similarity">
    <text evidence="1">Belongs to the NhaB Na(+)/H(+) (TC 2.A.34) antiporter family.</text>
</comment>
<evidence type="ECO:0000255" key="1">
    <source>
        <dbReference type="HAMAP-Rule" id="MF_01599"/>
    </source>
</evidence>
<gene>
    <name evidence="1" type="primary">nhaB</name>
    <name type="ordered locus">Z1949</name>
    <name type="ordered locus">ECs1681</name>
</gene>
<protein>
    <recommendedName>
        <fullName evidence="1">Na(+)/H(+) antiporter NhaB</fullName>
    </recommendedName>
    <alternativeName>
        <fullName evidence="1">Sodium/proton antiporter NhaB</fullName>
    </alternativeName>
</protein>
<keyword id="KW-0050">Antiport</keyword>
<keyword id="KW-0997">Cell inner membrane</keyword>
<keyword id="KW-1003">Cell membrane</keyword>
<keyword id="KW-0406">Ion transport</keyword>
<keyword id="KW-0472">Membrane</keyword>
<keyword id="KW-1185">Reference proteome</keyword>
<keyword id="KW-0915">Sodium</keyword>
<keyword id="KW-0739">Sodium transport</keyword>
<keyword id="KW-0812">Transmembrane</keyword>
<keyword id="KW-1133">Transmembrane helix</keyword>
<keyword id="KW-0813">Transport</keyword>
<name>NHAB_ECO57</name>
<organism>
    <name type="scientific">Escherichia coli O157:H7</name>
    <dbReference type="NCBI Taxonomy" id="83334"/>
    <lineage>
        <taxon>Bacteria</taxon>
        <taxon>Pseudomonadati</taxon>
        <taxon>Pseudomonadota</taxon>
        <taxon>Gammaproteobacteria</taxon>
        <taxon>Enterobacterales</taxon>
        <taxon>Enterobacteriaceae</taxon>
        <taxon>Escherichia</taxon>
    </lineage>
</organism>
<proteinExistence type="inferred from homology"/>
<accession>P0AFA8</accession>
<accession>P27377</accession>
<accession>P77533</accession>
<reference key="1">
    <citation type="journal article" date="2001" name="Nature">
        <title>Genome sequence of enterohaemorrhagic Escherichia coli O157:H7.</title>
        <authorList>
            <person name="Perna N.T."/>
            <person name="Plunkett G. III"/>
            <person name="Burland V."/>
            <person name="Mau B."/>
            <person name="Glasner J.D."/>
            <person name="Rose D.J."/>
            <person name="Mayhew G.F."/>
            <person name="Evans P.S."/>
            <person name="Gregor J."/>
            <person name="Kirkpatrick H.A."/>
            <person name="Posfai G."/>
            <person name="Hackett J."/>
            <person name="Klink S."/>
            <person name="Boutin A."/>
            <person name="Shao Y."/>
            <person name="Miller L."/>
            <person name="Grotbeck E.J."/>
            <person name="Davis N.W."/>
            <person name="Lim A."/>
            <person name="Dimalanta E.T."/>
            <person name="Potamousis K."/>
            <person name="Apodaca J."/>
            <person name="Anantharaman T.S."/>
            <person name="Lin J."/>
            <person name="Yen G."/>
            <person name="Schwartz D.C."/>
            <person name="Welch R.A."/>
            <person name="Blattner F.R."/>
        </authorList>
    </citation>
    <scope>NUCLEOTIDE SEQUENCE [LARGE SCALE GENOMIC DNA]</scope>
    <source>
        <strain>O157:H7 / EDL933 / ATCC 700927 / EHEC</strain>
    </source>
</reference>
<reference key="2">
    <citation type="journal article" date="2001" name="DNA Res.">
        <title>Complete genome sequence of enterohemorrhagic Escherichia coli O157:H7 and genomic comparison with a laboratory strain K-12.</title>
        <authorList>
            <person name="Hayashi T."/>
            <person name="Makino K."/>
            <person name="Ohnishi M."/>
            <person name="Kurokawa K."/>
            <person name="Ishii K."/>
            <person name="Yokoyama K."/>
            <person name="Han C.-G."/>
            <person name="Ohtsubo E."/>
            <person name="Nakayama K."/>
            <person name="Murata T."/>
            <person name="Tanaka M."/>
            <person name="Tobe T."/>
            <person name="Iida T."/>
            <person name="Takami H."/>
            <person name="Honda T."/>
            <person name="Sasakawa C."/>
            <person name="Ogasawara N."/>
            <person name="Yasunaga T."/>
            <person name="Kuhara S."/>
            <person name="Shiba T."/>
            <person name="Hattori M."/>
            <person name="Shinagawa H."/>
        </authorList>
    </citation>
    <scope>NUCLEOTIDE SEQUENCE [LARGE SCALE GENOMIC DNA]</scope>
    <source>
        <strain>O157:H7 / Sakai / RIMD 0509952 / EHEC</strain>
    </source>
</reference>